<accession>Q83VZ3</accession>
<name>HOA2_COMTE</name>
<comment type="catalytic activity">
    <reaction evidence="1">
        <text>(S)-4-hydroxy-2-oxopentanoate = acetaldehyde + pyruvate</text>
        <dbReference type="Rhea" id="RHEA:22624"/>
        <dbReference type="ChEBI" id="CHEBI:15343"/>
        <dbReference type="ChEBI" id="CHEBI:15361"/>
        <dbReference type="ChEBI" id="CHEBI:73143"/>
        <dbReference type="EC" id="4.1.3.39"/>
    </reaction>
</comment>
<comment type="similarity">
    <text evidence="1">Belongs to the 4-hydroxy-2-oxovalerate aldolase family.</text>
</comment>
<reference key="1">
    <citation type="journal article" date="2003" name="Appl. Environ. Microbiol.">
        <title>Gene encoding the hydrolase for the product of the meta-cleavage reaction in testosterone degradation by Comamonas testosteroni.</title>
        <authorList>
            <person name="Horinouchi M."/>
            <person name="Hayashi T."/>
            <person name="Koshino H."/>
            <person name="Yamamoto T."/>
            <person name="Kudo T."/>
        </authorList>
    </citation>
    <scope>NUCLEOTIDE SEQUENCE [GENOMIC DNA]</scope>
    <source>
        <strain>TA441</strain>
    </source>
</reference>
<sequence length="350" mass="37495">MSLKGKKITVHDMTLRDGMHPKRHQMTLEQMKSVATGLDAAGVPLIEVTHGDGLGGSSVNYGFPAHTDEEYLSTVIPLMKQAKVSALLLPGIGTVDHLKMAHELGVSTIRVATHCTEADVSEQHIAMARKMGMDTVGFLMMAHMYSAEGLVKQAKLMEGYGANCIYITDSAGYMLPDDVKERLSAVRQALKPETELGFHGHHNLAMGIANSLAAVEVGANRIDAAAAGLGAGAGNTPMEVLVAVCARMGIETGVDVFKIQDVAEDLVVPLMDFPIRIDRDALTLGYAGVYGSFLLFAKRAEAKYGIPARELLLELGRRGMVGGQEDMIEDTALTMVRERQKLGHKVAVAA</sequence>
<feature type="chain" id="PRO_0000387815" description="4-hydroxy-2-oxovalerate aldolase 2">
    <location>
        <begin position="1"/>
        <end position="350"/>
    </location>
</feature>
<feature type="domain" description="Pyruvate carboxyltransferase" evidence="1">
    <location>
        <begin position="8"/>
        <end position="260"/>
    </location>
</feature>
<feature type="active site" description="Proton acceptor" evidence="1">
    <location>
        <position position="20"/>
    </location>
</feature>
<feature type="binding site" evidence="1">
    <location>
        <begin position="16"/>
        <end position="17"/>
    </location>
    <ligand>
        <name>substrate</name>
    </ligand>
</feature>
<feature type="binding site" evidence="1">
    <location>
        <position position="17"/>
    </location>
    <ligand>
        <name>Mn(2+)</name>
        <dbReference type="ChEBI" id="CHEBI:29035"/>
    </ligand>
</feature>
<feature type="binding site" evidence="1">
    <location>
        <position position="170"/>
    </location>
    <ligand>
        <name>substrate</name>
    </ligand>
</feature>
<feature type="binding site" evidence="1">
    <location>
        <position position="199"/>
    </location>
    <ligand>
        <name>Mn(2+)</name>
        <dbReference type="ChEBI" id="CHEBI:29035"/>
    </ligand>
</feature>
<feature type="binding site" evidence="1">
    <location>
        <position position="199"/>
    </location>
    <ligand>
        <name>substrate</name>
    </ligand>
</feature>
<feature type="binding site" evidence="1">
    <location>
        <position position="201"/>
    </location>
    <ligand>
        <name>Mn(2+)</name>
        <dbReference type="ChEBI" id="CHEBI:29035"/>
    </ligand>
</feature>
<feature type="binding site" evidence="1">
    <location>
        <position position="290"/>
    </location>
    <ligand>
        <name>substrate</name>
    </ligand>
</feature>
<feature type="site" description="Transition state stabilizer" evidence="1">
    <location>
        <position position="16"/>
    </location>
</feature>
<proteinExistence type="inferred from homology"/>
<gene>
    <name type="primary">tesG</name>
</gene>
<dbReference type="EC" id="4.1.3.39" evidence="1"/>
<dbReference type="EMBL" id="AB063482">
    <property type="protein sequence ID" value="BAC67696.1"/>
    <property type="molecule type" value="Genomic_DNA"/>
</dbReference>
<dbReference type="RefSeq" id="WP_149355994.1">
    <property type="nucleotide sequence ID" value="NZ_BKBW01000005.1"/>
</dbReference>
<dbReference type="SMR" id="Q83VZ3"/>
<dbReference type="BioCyc" id="MetaCyc:MONOMER-16929"/>
<dbReference type="GO" id="GO:0003852">
    <property type="term" value="F:2-isopropylmalate synthase activity"/>
    <property type="evidence" value="ECO:0007669"/>
    <property type="project" value="TreeGrafter"/>
</dbReference>
<dbReference type="GO" id="GO:0008701">
    <property type="term" value="F:4-hydroxy-2-oxovalerate aldolase activity"/>
    <property type="evidence" value="ECO:0007669"/>
    <property type="project" value="UniProtKB-UniRule"/>
</dbReference>
<dbReference type="GO" id="GO:0030145">
    <property type="term" value="F:manganese ion binding"/>
    <property type="evidence" value="ECO:0007669"/>
    <property type="project" value="UniProtKB-UniRule"/>
</dbReference>
<dbReference type="GO" id="GO:0009056">
    <property type="term" value="P:catabolic process"/>
    <property type="evidence" value="ECO:0007669"/>
    <property type="project" value="UniProtKB-KW"/>
</dbReference>
<dbReference type="GO" id="GO:0009098">
    <property type="term" value="P:L-leucine biosynthetic process"/>
    <property type="evidence" value="ECO:0007669"/>
    <property type="project" value="TreeGrafter"/>
</dbReference>
<dbReference type="CDD" id="cd07943">
    <property type="entry name" value="DRE_TIM_HOA"/>
    <property type="match status" value="1"/>
</dbReference>
<dbReference type="Gene3D" id="1.10.8.60">
    <property type="match status" value="1"/>
</dbReference>
<dbReference type="Gene3D" id="3.20.20.70">
    <property type="entry name" value="Aldolase class I"/>
    <property type="match status" value="1"/>
</dbReference>
<dbReference type="HAMAP" id="MF_01656">
    <property type="entry name" value="HOA"/>
    <property type="match status" value="1"/>
</dbReference>
<dbReference type="InterPro" id="IPR050073">
    <property type="entry name" value="2-IPM_HCS-like"/>
</dbReference>
<dbReference type="InterPro" id="IPR017629">
    <property type="entry name" value="4OH_2_O-val_aldolase"/>
</dbReference>
<dbReference type="InterPro" id="IPR013785">
    <property type="entry name" value="Aldolase_TIM"/>
</dbReference>
<dbReference type="InterPro" id="IPR012425">
    <property type="entry name" value="DmpG_comm"/>
</dbReference>
<dbReference type="InterPro" id="IPR035685">
    <property type="entry name" value="DRE_TIM_HOA"/>
</dbReference>
<dbReference type="InterPro" id="IPR000891">
    <property type="entry name" value="PYR_CT"/>
</dbReference>
<dbReference type="NCBIfam" id="TIGR03217">
    <property type="entry name" value="4OH_2_O_val_ald"/>
    <property type="match status" value="1"/>
</dbReference>
<dbReference type="NCBIfam" id="NF006049">
    <property type="entry name" value="PRK08195.1"/>
    <property type="match status" value="1"/>
</dbReference>
<dbReference type="PANTHER" id="PTHR10277:SF9">
    <property type="entry name" value="2-ISOPROPYLMALATE SYNTHASE 1, CHLOROPLASTIC-RELATED"/>
    <property type="match status" value="1"/>
</dbReference>
<dbReference type="PANTHER" id="PTHR10277">
    <property type="entry name" value="HOMOCITRATE SYNTHASE-RELATED"/>
    <property type="match status" value="1"/>
</dbReference>
<dbReference type="Pfam" id="PF07836">
    <property type="entry name" value="DmpG_comm"/>
    <property type="match status" value="1"/>
</dbReference>
<dbReference type="Pfam" id="PF00682">
    <property type="entry name" value="HMGL-like"/>
    <property type="match status" value="1"/>
</dbReference>
<dbReference type="SUPFAM" id="SSF51569">
    <property type="entry name" value="Aldolase"/>
    <property type="match status" value="1"/>
</dbReference>
<dbReference type="SUPFAM" id="SSF89000">
    <property type="entry name" value="post-HMGL domain-like"/>
    <property type="match status" value="1"/>
</dbReference>
<dbReference type="PROSITE" id="PS50991">
    <property type="entry name" value="PYR_CT"/>
    <property type="match status" value="1"/>
</dbReference>
<organism>
    <name type="scientific">Comamonas testosteroni</name>
    <name type="common">Pseudomonas testosteroni</name>
    <dbReference type="NCBI Taxonomy" id="285"/>
    <lineage>
        <taxon>Bacteria</taxon>
        <taxon>Pseudomonadati</taxon>
        <taxon>Pseudomonadota</taxon>
        <taxon>Betaproteobacteria</taxon>
        <taxon>Burkholderiales</taxon>
        <taxon>Comamonadaceae</taxon>
        <taxon>Comamonas</taxon>
    </lineage>
</organism>
<protein>
    <recommendedName>
        <fullName evidence="1">4-hydroxy-2-oxovalerate aldolase 2</fullName>
        <shortName evidence="1">HOA 2</shortName>
        <ecNumber evidence="1">4.1.3.39</ecNumber>
    </recommendedName>
    <alternativeName>
        <fullName evidence="1">4-hydroxy-2-keto-pentanoic acid aldolase 2</fullName>
    </alternativeName>
    <alternativeName>
        <fullName evidence="1">4-hydroxy-2-oxopentanoate aldolase 2</fullName>
    </alternativeName>
</protein>
<evidence type="ECO:0000255" key="1">
    <source>
        <dbReference type="HAMAP-Rule" id="MF_01656"/>
    </source>
</evidence>
<keyword id="KW-0058">Aromatic hydrocarbons catabolism</keyword>
<keyword id="KW-0456">Lyase</keyword>
<keyword id="KW-0464">Manganese</keyword>
<keyword id="KW-0479">Metal-binding</keyword>